<protein>
    <recommendedName>
        <fullName evidence="1">Photosystem I P700 chlorophyll a apoprotein A1</fullName>
        <ecNumber evidence="1">1.97.1.12</ecNumber>
    </recommendedName>
    <alternativeName>
        <fullName evidence="1">PSI-A</fullName>
    </alternativeName>
    <alternativeName>
        <fullName evidence="1">PsaA</fullName>
    </alternativeName>
</protein>
<gene>
    <name evidence="1" type="primary">psaA</name>
</gene>
<feature type="chain" id="PRO_0000088561" description="Photosystem I P700 chlorophyll a apoprotein A1">
    <location>
        <begin position="1"/>
        <end position="751"/>
    </location>
</feature>
<feature type="transmembrane region" description="Helical; Name=I" evidence="1">
    <location>
        <begin position="73"/>
        <end position="96"/>
    </location>
</feature>
<feature type="transmembrane region" description="Helical; Name=II" evidence="1">
    <location>
        <begin position="159"/>
        <end position="182"/>
    </location>
</feature>
<feature type="transmembrane region" description="Helical; Name=III" evidence="1">
    <location>
        <begin position="198"/>
        <end position="222"/>
    </location>
</feature>
<feature type="transmembrane region" description="Helical; Name=IV" evidence="1">
    <location>
        <begin position="294"/>
        <end position="312"/>
    </location>
</feature>
<feature type="transmembrane region" description="Helical; Name=V" evidence="1">
    <location>
        <begin position="349"/>
        <end position="372"/>
    </location>
</feature>
<feature type="transmembrane region" description="Helical; Name=VI" evidence="1">
    <location>
        <begin position="388"/>
        <end position="414"/>
    </location>
</feature>
<feature type="transmembrane region" description="Helical; Name=VII" evidence="1">
    <location>
        <begin position="436"/>
        <end position="458"/>
    </location>
</feature>
<feature type="transmembrane region" description="Helical; Name=VIII" evidence="1">
    <location>
        <begin position="533"/>
        <end position="551"/>
    </location>
</feature>
<feature type="transmembrane region" description="Helical; Name=IX" evidence="1">
    <location>
        <begin position="591"/>
        <end position="612"/>
    </location>
</feature>
<feature type="transmembrane region" description="Helical; Name=X" evidence="1">
    <location>
        <begin position="665"/>
        <end position="687"/>
    </location>
</feature>
<feature type="transmembrane region" description="Helical; Name=XI" evidence="1">
    <location>
        <begin position="725"/>
        <end position="745"/>
    </location>
</feature>
<feature type="binding site" evidence="1">
    <location>
        <position position="575"/>
    </location>
    <ligand>
        <name>[4Fe-4S] cluster</name>
        <dbReference type="ChEBI" id="CHEBI:49883"/>
        <note>ligand shared between dimeric partners</note>
    </ligand>
</feature>
<feature type="binding site" evidence="1">
    <location>
        <position position="584"/>
    </location>
    <ligand>
        <name>[4Fe-4S] cluster</name>
        <dbReference type="ChEBI" id="CHEBI:49883"/>
        <note>ligand shared between dimeric partners</note>
    </ligand>
</feature>
<feature type="binding site" description="axial binding residue" evidence="1">
    <location>
        <position position="676"/>
    </location>
    <ligand>
        <name>chlorophyll a'</name>
        <dbReference type="ChEBI" id="CHEBI:189419"/>
        <label>A1</label>
    </ligand>
    <ligandPart>
        <name>Mg</name>
        <dbReference type="ChEBI" id="CHEBI:25107"/>
    </ligandPart>
</feature>
<feature type="binding site" description="axial binding residue" evidence="1">
    <location>
        <position position="684"/>
    </location>
    <ligand>
        <name>chlorophyll a</name>
        <dbReference type="ChEBI" id="CHEBI:58416"/>
        <label>A3</label>
    </ligand>
    <ligandPart>
        <name>Mg</name>
        <dbReference type="ChEBI" id="CHEBI:25107"/>
    </ligandPart>
</feature>
<feature type="binding site" evidence="1">
    <location>
        <position position="692"/>
    </location>
    <ligand>
        <name>chlorophyll a</name>
        <dbReference type="ChEBI" id="CHEBI:58416"/>
        <label>A3</label>
    </ligand>
</feature>
<feature type="binding site" evidence="1">
    <location>
        <position position="693"/>
    </location>
    <ligand>
        <name>phylloquinone</name>
        <dbReference type="ChEBI" id="CHEBI:18067"/>
        <label>A</label>
    </ligand>
</feature>
<comment type="function">
    <text>PsaA and PsaB bind P700, the primary electron donor of photosystem I (PSI), as well as the electron acceptors A0, A1 and FX. PSI is a plastocyanin/cytochrome c6-ferredoxin oxidoreductase, converting photonic excitation into a charge separation, which transfers an electron from the donor P700 chlorophyll pair to the spectroscopically characterized acceptors A0, A1, FX, FA and FB in turn. Oxidized P700 is reduced on the lumenal side of the thylakoid membrane by plastocyanin or cytochrome c6.</text>
</comment>
<comment type="catalytic activity">
    <reaction evidence="1">
        <text>reduced [plastocyanin] + hnu + oxidized [2Fe-2S]-[ferredoxin] = oxidized [plastocyanin] + reduced [2Fe-2S]-[ferredoxin]</text>
        <dbReference type="Rhea" id="RHEA:30407"/>
        <dbReference type="Rhea" id="RHEA-COMP:10000"/>
        <dbReference type="Rhea" id="RHEA-COMP:10001"/>
        <dbReference type="Rhea" id="RHEA-COMP:10039"/>
        <dbReference type="Rhea" id="RHEA-COMP:10040"/>
        <dbReference type="ChEBI" id="CHEBI:29036"/>
        <dbReference type="ChEBI" id="CHEBI:30212"/>
        <dbReference type="ChEBI" id="CHEBI:33737"/>
        <dbReference type="ChEBI" id="CHEBI:33738"/>
        <dbReference type="ChEBI" id="CHEBI:49552"/>
        <dbReference type="EC" id="1.97.1.12"/>
    </reaction>
</comment>
<comment type="cofactor">
    <text evidence="1">P700 is a chlorophyll a/chlorophyll a' dimer, A0 is one or more chlorophyll a, A1 is one or both phylloquinones and FX is a shared 4Fe-4S iron-sulfur center.</text>
</comment>
<comment type="subunit">
    <text evidence="1">The PsaA/B heterodimer binds the P700 chlorophyll special pair and subsequent electron acceptors. PSI consists of a core antenna complex that captures photons, and an electron transfer chain that converts photonic excitation into a charge separation. The eukaryotic PSI reaction center is composed of at least 11 subunits.</text>
</comment>
<comment type="subcellular location">
    <subcellularLocation>
        <location evidence="1">Plastid</location>
        <location evidence="1">Chloroplast thylakoid membrane</location>
        <topology evidence="1">Multi-pass membrane protein</topology>
    </subcellularLocation>
</comment>
<comment type="similarity">
    <text evidence="1">Belongs to the PsaA/PsaB family.</text>
</comment>
<proteinExistence type="inferred from homology"/>
<name>PSAA_NEPOL</name>
<sequence>MTISPPEREAKKVKIVVDRNPVVTSFEKWAKPGHFSRTLAKGPTTTTWIWDLHADAHDFDSHTTDLEDISPKIFSAHFGQLGVILIWLSGMYFHGARFSNYEAWLSDPTHIKPSAQVVWPIVGQEILNGDVGGGFQGIQITSGFFQLWRASGITSELQLYSTAIGGLLLAAAMFFAGWFHYHKAAPKLEWFQNVESMMNHHLGGLLGLGSLGWAGHQIHVSLPVNKLLNAGVDPKEIPLPHEFLLNRDLMAQLYPSFAKGLTPFFTLNWAEYGDFLTFRGGLNPVTGGLWLSDTAHHHVAIAVLFLVAGHMYRTNWGIGHSMKEILEAHKGPFTGEGHKGLYEILTTSWHAQLAINLALFGSLSIVVAHHMYAMPPYPYLATDYGTQLSLFTHHMWIGGFCVVGAAAHAAIFMVRDYDPTNNYNNLLDRVIRHRDAIISHLNWVCIFLGFHSFGLYIHNDTMSALGRPQDMFSDTAIQLQPVFAQWIHKTHALAPGLTAPNALASTSPSWGGDVVAVGGKVAMMPISLGTADFLVHHIHAFTIHVTVLILLKGVLFARSSRLIPDKANLGFRFPCDGPGRGGTCQVSAWDHVFLGLFWMYNSISVVIFHFSWKMQSDVWGNVTAQGVSHITGGNFALSSNTINGWLRDFLWAQASQVIQSYGSALSAYGLIFLGAHFIWAFSLMFLFSGRGYWQELIESIVWAHNKLKVAPSIQPRALSITQGRAVGVAHYLLGGIATTWAFFLARIIAVG</sequence>
<reference key="1">
    <citation type="journal article" date="1999" name="Proc. Natl. Acad. Sci. U.S.A.">
        <title>The complete chloroplast DNA sequence of the green alga Nephroselmis olivacea: insights into the architecture of ancestral chloroplast genomes.</title>
        <authorList>
            <person name="Turmel M."/>
            <person name="Otis C."/>
            <person name="Lemieux C."/>
        </authorList>
    </citation>
    <scope>NUCLEOTIDE SEQUENCE [LARGE SCALE GENOMIC DNA]</scope>
    <source>
        <strain>NIES-484 / S-N-5-8</strain>
    </source>
</reference>
<accession>Q9TKW2</accession>
<evidence type="ECO:0000255" key="1">
    <source>
        <dbReference type="HAMAP-Rule" id="MF_00458"/>
    </source>
</evidence>
<organism>
    <name type="scientific">Nephroselmis olivacea</name>
    <name type="common">Green alga</name>
    <dbReference type="NCBI Taxonomy" id="31312"/>
    <lineage>
        <taxon>Eukaryota</taxon>
        <taxon>Viridiplantae</taxon>
        <taxon>Chlorophyta</taxon>
        <taxon>Nephroselmidophyceae</taxon>
        <taxon>Nephroselmidales</taxon>
        <taxon>Nephroselmidaceae</taxon>
        <taxon>Nephroselmis</taxon>
    </lineage>
</organism>
<keyword id="KW-0004">4Fe-4S</keyword>
<keyword id="KW-0148">Chlorophyll</keyword>
<keyword id="KW-0150">Chloroplast</keyword>
<keyword id="KW-0157">Chromophore</keyword>
<keyword id="KW-0249">Electron transport</keyword>
<keyword id="KW-0408">Iron</keyword>
<keyword id="KW-0411">Iron-sulfur</keyword>
<keyword id="KW-0460">Magnesium</keyword>
<keyword id="KW-0472">Membrane</keyword>
<keyword id="KW-0479">Metal-binding</keyword>
<keyword id="KW-0560">Oxidoreductase</keyword>
<keyword id="KW-0602">Photosynthesis</keyword>
<keyword id="KW-0603">Photosystem I</keyword>
<keyword id="KW-0934">Plastid</keyword>
<keyword id="KW-0793">Thylakoid</keyword>
<keyword id="KW-0812">Transmembrane</keyword>
<keyword id="KW-1133">Transmembrane helix</keyword>
<keyword id="KW-0813">Transport</keyword>
<geneLocation type="chloroplast"/>
<dbReference type="EC" id="1.97.1.12" evidence="1"/>
<dbReference type="EMBL" id="AF137379">
    <property type="protein sequence ID" value="AAD54854.1"/>
    <property type="molecule type" value="Genomic_DNA"/>
</dbReference>
<dbReference type="RefSeq" id="NP_050883.1">
    <property type="nucleotide sequence ID" value="NC_000927.1"/>
</dbReference>
<dbReference type="SMR" id="Q9TKW2"/>
<dbReference type="GeneID" id="802030"/>
<dbReference type="GO" id="GO:0009535">
    <property type="term" value="C:chloroplast thylakoid membrane"/>
    <property type="evidence" value="ECO:0007669"/>
    <property type="project" value="UniProtKB-SubCell"/>
</dbReference>
<dbReference type="GO" id="GO:0009522">
    <property type="term" value="C:photosystem I"/>
    <property type="evidence" value="ECO:0007669"/>
    <property type="project" value="UniProtKB-KW"/>
</dbReference>
<dbReference type="GO" id="GO:0051539">
    <property type="term" value="F:4 iron, 4 sulfur cluster binding"/>
    <property type="evidence" value="ECO:0007669"/>
    <property type="project" value="UniProtKB-KW"/>
</dbReference>
<dbReference type="GO" id="GO:0016168">
    <property type="term" value="F:chlorophyll binding"/>
    <property type="evidence" value="ECO:0007669"/>
    <property type="project" value="UniProtKB-KW"/>
</dbReference>
<dbReference type="GO" id="GO:0009055">
    <property type="term" value="F:electron transfer activity"/>
    <property type="evidence" value="ECO:0007669"/>
    <property type="project" value="UniProtKB-UniRule"/>
</dbReference>
<dbReference type="GO" id="GO:0000287">
    <property type="term" value="F:magnesium ion binding"/>
    <property type="evidence" value="ECO:0007669"/>
    <property type="project" value="UniProtKB-UniRule"/>
</dbReference>
<dbReference type="GO" id="GO:0016491">
    <property type="term" value="F:oxidoreductase activity"/>
    <property type="evidence" value="ECO:0007669"/>
    <property type="project" value="UniProtKB-KW"/>
</dbReference>
<dbReference type="GO" id="GO:0015979">
    <property type="term" value="P:photosynthesis"/>
    <property type="evidence" value="ECO:0007669"/>
    <property type="project" value="UniProtKB-UniRule"/>
</dbReference>
<dbReference type="FunFam" id="1.20.1130.10:FF:000001">
    <property type="entry name" value="Photosystem I P700 chlorophyll a apoprotein A2"/>
    <property type="match status" value="1"/>
</dbReference>
<dbReference type="Gene3D" id="1.20.1130.10">
    <property type="entry name" value="Photosystem I PsaA/PsaB"/>
    <property type="match status" value="1"/>
</dbReference>
<dbReference type="HAMAP" id="MF_00458">
    <property type="entry name" value="PSI_PsaA"/>
    <property type="match status" value="1"/>
</dbReference>
<dbReference type="InterPro" id="IPR006243">
    <property type="entry name" value="PSI_PsaA"/>
</dbReference>
<dbReference type="InterPro" id="IPR001280">
    <property type="entry name" value="PSI_PsaA/B"/>
</dbReference>
<dbReference type="InterPro" id="IPR020586">
    <property type="entry name" value="PSI_PsaA/B_CS"/>
</dbReference>
<dbReference type="InterPro" id="IPR036408">
    <property type="entry name" value="PSI_PsaA/B_sf"/>
</dbReference>
<dbReference type="NCBIfam" id="TIGR01335">
    <property type="entry name" value="psaA"/>
    <property type="match status" value="1"/>
</dbReference>
<dbReference type="PANTHER" id="PTHR30128">
    <property type="entry name" value="OUTER MEMBRANE PROTEIN, OMPA-RELATED"/>
    <property type="match status" value="1"/>
</dbReference>
<dbReference type="PANTHER" id="PTHR30128:SF19">
    <property type="entry name" value="PHOTOSYSTEM I P700 CHLOROPHYLL A APOPROTEIN A1-RELATED"/>
    <property type="match status" value="1"/>
</dbReference>
<dbReference type="Pfam" id="PF00223">
    <property type="entry name" value="PsaA_PsaB"/>
    <property type="match status" value="1"/>
</dbReference>
<dbReference type="PIRSF" id="PIRSF002905">
    <property type="entry name" value="PSI_A"/>
    <property type="match status" value="1"/>
</dbReference>
<dbReference type="PRINTS" id="PR00257">
    <property type="entry name" value="PHOTSYSPSAAB"/>
</dbReference>
<dbReference type="SUPFAM" id="SSF81558">
    <property type="entry name" value="Photosystem I subunits PsaA/PsaB"/>
    <property type="match status" value="1"/>
</dbReference>
<dbReference type="PROSITE" id="PS00419">
    <property type="entry name" value="PHOTOSYSTEM_I_PSAAB"/>
    <property type="match status" value="1"/>
</dbReference>